<keyword id="KW-0025">Alternative splicing</keyword>
<keyword id="KW-0175">Coiled coil</keyword>
<keyword id="KW-1185">Reference proteome</keyword>
<keyword id="KW-0677">Repeat</keyword>
<keyword id="KW-0853">WD repeat</keyword>
<proteinExistence type="evidence at protein level"/>
<sequence length="471" mass="52599">MSRRVVRQSKFRHVFGQAAKADQAYEDIRVSKVTWDSAFCAVNPKFLAIIVEAGGGGAFIVLPLAKTGRVDKNYPLVTGHTGPVLDIDWCPHNDNVIASASDDTTVMVWQIPDYTPVRNITEPVITLEGHSKRVGILSWHPTARNVLLSAGGDNVIIIWNVGTGEVLLSLDDIHPDVIHSVCWNSNGSLLATTCKDKTLRIIDPRKSQVVAERARPHEGARPLRAVFTADGKLLSTGFSRMSERQLALWDPNNFEEPVALQEMDTSNGVLLPFYDPDSSIVYLCGKGDSSIRYFEITEEPPFVHYLNTFSSKEPQRGMGFMPKRGLDVSKCEIARFYKLHERKCEPIIMTVPRKSDLFQDDLYPDTPGPEPALEADEWLSGQDAEPVLISLKEGYVPPKHRELRVTKRNILDVRPPASPRRSQSASEAPLSQHTLETLLEEIKALRDRVQAQEERITALENMLCELVDGTD</sequence>
<name>CORO6_MOUSE</name>
<accession>Q920M5</accession>
<accession>Q3TZ14</accession>
<accession>Q5F262</accession>
<accession>Q5F263</accession>
<accession>Q5F264</accession>
<accession>Q5F265</accession>
<accession>Q920M3</accession>
<accession>Q920M4</accession>
<organism>
    <name type="scientific">Mus musculus</name>
    <name type="common">Mouse</name>
    <dbReference type="NCBI Taxonomy" id="10090"/>
    <lineage>
        <taxon>Eukaryota</taxon>
        <taxon>Metazoa</taxon>
        <taxon>Chordata</taxon>
        <taxon>Craniata</taxon>
        <taxon>Vertebrata</taxon>
        <taxon>Euteleostomi</taxon>
        <taxon>Mammalia</taxon>
        <taxon>Eutheria</taxon>
        <taxon>Euarchontoglires</taxon>
        <taxon>Glires</taxon>
        <taxon>Rodentia</taxon>
        <taxon>Myomorpha</taxon>
        <taxon>Muroidea</taxon>
        <taxon>Muridae</taxon>
        <taxon>Murinae</taxon>
        <taxon>Mus</taxon>
        <taxon>Mus</taxon>
    </lineage>
</organism>
<gene>
    <name type="primary">Coro6</name>
</gene>
<reference key="1">
    <citation type="submission" date="2001-08" db="EMBL/GenBank/DDBJ databases">
        <title>Expression and function of mammalian clipin E/coronin 6.</title>
        <authorList>
            <person name="Watanabe N."/>
            <person name="Takeuchi K."/>
            <person name="Kusumi A."/>
        </authorList>
    </citation>
    <scope>NUCLEOTIDE SEQUENCE [MRNA] (ISOFORMS A; B AND C)</scope>
    <source>
        <strain>ICR</strain>
        <tissue>Brain</tissue>
    </source>
</reference>
<reference key="2">
    <citation type="journal article" date="2005" name="Science">
        <title>The transcriptional landscape of the mammalian genome.</title>
        <authorList>
            <person name="Carninci P."/>
            <person name="Kasukawa T."/>
            <person name="Katayama S."/>
            <person name="Gough J."/>
            <person name="Frith M.C."/>
            <person name="Maeda N."/>
            <person name="Oyama R."/>
            <person name="Ravasi T."/>
            <person name="Lenhard B."/>
            <person name="Wells C."/>
            <person name="Kodzius R."/>
            <person name="Shimokawa K."/>
            <person name="Bajic V.B."/>
            <person name="Brenner S.E."/>
            <person name="Batalov S."/>
            <person name="Forrest A.R."/>
            <person name="Zavolan M."/>
            <person name="Davis M.J."/>
            <person name="Wilming L.G."/>
            <person name="Aidinis V."/>
            <person name="Allen J.E."/>
            <person name="Ambesi-Impiombato A."/>
            <person name="Apweiler R."/>
            <person name="Aturaliya R.N."/>
            <person name="Bailey T.L."/>
            <person name="Bansal M."/>
            <person name="Baxter L."/>
            <person name="Beisel K.W."/>
            <person name="Bersano T."/>
            <person name="Bono H."/>
            <person name="Chalk A.M."/>
            <person name="Chiu K.P."/>
            <person name="Choudhary V."/>
            <person name="Christoffels A."/>
            <person name="Clutterbuck D.R."/>
            <person name="Crowe M.L."/>
            <person name="Dalla E."/>
            <person name="Dalrymple B.P."/>
            <person name="de Bono B."/>
            <person name="Della Gatta G."/>
            <person name="di Bernardo D."/>
            <person name="Down T."/>
            <person name="Engstrom P."/>
            <person name="Fagiolini M."/>
            <person name="Faulkner G."/>
            <person name="Fletcher C.F."/>
            <person name="Fukushima T."/>
            <person name="Furuno M."/>
            <person name="Futaki S."/>
            <person name="Gariboldi M."/>
            <person name="Georgii-Hemming P."/>
            <person name="Gingeras T.R."/>
            <person name="Gojobori T."/>
            <person name="Green R.E."/>
            <person name="Gustincich S."/>
            <person name="Harbers M."/>
            <person name="Hayashi Y."/>
            <person name="Hensch T.K."/>
            <person name="Hirokawa N."/>
            <person name="Hill D."/>
            <person name="Huminiecki L."/>
            <person name="Iacono M."/>
            <person name="Ikeo K."/>
            <person name="Iwama A."/>
            <person name="Ishikawa T."/>
            <person name="Jakt M."/>
            <person name="Kanapin A."/>
            <person name="Katoh M."/>
            <person name="Kawasawa Y."/>
            <person name="Kelso J."/>
            <person name="Kitamura H."/>
            <person name="Kitano H."/>
            <person name="Kollias G."/>
            <person name="Krishnan S.P."/>
            <person name="Kruger A."/>
            <person name="Kummerfeld S.K."/>
            <person name="Kurochkin I.V."/>
            <person name="Lareau L.F."/>
            <person name="Lazarevic D."/>
            <person name="Lipovich L."/>
            <person name="Liu J."/>
            <person name="Liuni S."/>
            <person name="McWilliam S."/>
            <person name="Madan Babu M."/>
            <person name="Madera M."/>
            <person name="Marchionni L."/>
            <person name="Matsuda H."/>
            <person name="Matsuzawa S."/>
            <person name="Miki H."/>
            <person name="Mignone F."/>
            <person name="Miyake S."/>
            <person name="Morris K."/>
            <person name="Mottagui-Tabar S."/>
            <person name="Mulder N."/>
            <person name="Nakano N."/>
            <person name="Nakauchi H."/>
            <person name="Ng P."/>
            <person name="Nilsson R."/>
            <person name="Nishiguchi S."/>
            <person name="Nishikawa S."/>
            <person name="Nori F."/>
            <person name="Ohara O."/>
            <person name="Okazaki Y."/>
            <person name="Orlando V."/>
            <person name="Pang K.C."/>
            <person name="Pavan W.J."/>
            <person name="Pavesi G."/>
            <person name="Pesole G."/>
            <person name="Petrovsky N."/>
            <person name="Piazza S."/>
            <person name="Reed J."/>
            <person name="Reid J.F."/>
            <person name="Ring B.Z."/>
            <person name="Ringwald M."/>
            <person name="Rost B."/>
            <person name="Ruan Y."/>
            <person name="Salzberg S.L."/>
            <person name="Sandelin A."/>
            <person name="Schneider C."/>
            <person name="Schoenbach C."/>
            <person name="Sekiguchi K."/>
            <person name="Semple C.A."/>
            <person name="Seno S."/>
            <person name="Sessa L."/>
            <person name="Sheng Y."/>
            <person name="Shibata Y."/>
            <person name="Shimada H."/>
            <person name="Shimada K."/>
            <person name="Silva D."/>
            <person name="Sinclair B."/>
            <person name="Sperling S."/>
            <person name="Stupka E."/>
            <person name="Sugiura K."/>
            <person name="Sultana R."/>
            <person name="Takenaka Y."/>
            <person name="Taki K."/>
            <person name="Tammoja K."/>
            <person name="Tan S.L."/>
            <person name="Tang S."/>
            <person name="Taylor M.S."/>
            <person name="Tegner J."/>
            <person name="Teichmann S.A."/>
            <person name="Ueda H.R."/>
            <person name="van Nimwegen E."/>
            <person name="Verardo R."/>
            <person name="Wei C.L."/>
            <person name="Yagi K."/>
            <person name="Yamanishi H."/>
            <person name="Zabarovsky E."/>
            <person name="Zhu S."/>
            <person name="Zimmer A."/>
            <person name="Hide W."/>
            <person name="Bult C."/>
            <person name="Grimmond S.M."/>
            <person name="Teasdale R.D."/>
            <person name="Liu E.T."/>
            <person name="Brusic V."/>
            <person name="Quackenbush J."/>
            <person name="Wahlestedt C."/>
            <person name="Mattick J.S."/>
            <person name="Hume D.A."/>
            <person name="Kai C."/>
            <person name="Sasaki D."/>
            <person name="Tomaru Y."/>
            <person name="Fukuda S."/>
            <person name="Kanamori-Katayama M."/>
            <person name="Suzuki M."/>
            <person name="Aoki J."/>
            <person name="Arakawa T."/>
            <person name="Iida J."/>
            <person name="Imamura K."/>
            <person name="Itoh M."/>
            <person name="Kato T."/>
            <person name="Kawaji H."/>
            <person name="Kawagashira N."/>
            <person name="Kawashima T."/>
            <person name="Kojima M."/>
            <person name="Kondo S."/>
            <person name="Konno H."/>
            <person name="Nakano K."/>
            <person name="Ninomiya N."/>
            <person name="Nishio T."/>
            <person name="Okada M."/>
            <person name="Plessy C."/>
            <person name="Shibata K."/>
            <person name="Shiraki T."/>
            <person name="Suzuki S."/>
            <person name="Tagami M."/>
            <person name="Waki K."/>
            <person name="Watahiki A."/>
            <person name="Okamura-Oho Y."/>
            <person name="Suzuki H."/>
            <person name="Kawai J."/>
            <person name="Hayashizaki Y."/>
        </authorList>
    </citation>
    <scope>NUCLEOTIDE SEQUENCE [LARGE SCALE MRNA] (ISOFORM C)</scope>
    <source>
        <strain>C57BL/6J</strain>
        <tissue>Inner ear</tissue>
    </source>
</reference>
<reference key="3">
    <citation type="journal article" date="2009" name="PLoS Biol.">
        <title>Lineage-specific biology revealed by a finished genome assembly of the mouse.</title>
        <authorList>
            <person name="Church D.M."/>
            <person name="Goodstadt L."/>
            <person name="Hillier L.W."/>
            <person name="Zody M.C."/>
            <person name="Goldstein S."/>
            <person name="She X."/>
            <person name="Bult C.J."/>
            <person name="Agarwala R."/>
            <person name="Cherry J.L."/>
            <person name="DiCuccio M."/>
            <person name="Hlavina W."/>
            <person name="Kapustin Y."/>
            <person name="Meric P."/>
            <person name="Maglott D."/>
            <person name="Birtle Z."/>
            <person name="Marques A.C."/>
            <person name="Graves T."/>
            <person name="Zhou S."/>
            <person name="Teague B."/>
            <person name="Potamousis K."/>
            <person name="Churas C."/>
            <person name="Place M."/>
            <person name="Herschleb J."/>
            <person name="Runnheim R."/>
            <person name="Forrest D."/>
            <person name="Amos-Landgraf J."/>
            <person name="Schwartz D.C."/>
            <person name="Cheng Z."/>
            <person name="Lindblad-Toh K."/>
            <person name="Eichler E.E."/>
            <person name="Ponting C.P."/>
        </authorList>
    </citation>
    <scope>NUCLEOTIDE SEQUENCE [LARGE SCALE GENOMIC DNA]</scope>
    <source>
        <strain>C57BL/6J</strain>
    </source>
</reference>
<reference key="4">
    <citation type="journal article" date="2010" name="Cell">
        <title>A tissue-specific atlas of mouse protein phosphorylation and expression.</title>
        <authorList>
            <person name="Huttlin E.L."/>
            <person name="Jedrychowski M.P."/>
            <person name="Elias J.E."/>
            <person name="Goswami T."/>
            <person name="Rad R."/>
            <person name="Beausoleil S.A."/>
            <person name="Villen J."/>
            <person name="Haas W."/>
            <person name="Sowa M.E."/>
            <person name="Gygi S.P."/>
        </authorList>
    </citation>
    <scope>IDENTIFICATION BY MASS SPECTROMETRY [LARGE SCALE ANALYSIS]</scope>
    <source>
        <tissue>Heart</tissue>
    </source>
</reference>
<evidence type="ECO:0000255" key="1"/>
<evidence type="ECO:0000256" key="2">
    <source>
        <dbReference type="SAM" id="MobiDB-lite"/>
    </source>
</evidence>
<evidence type="ECO:0000303" key="3">
    <source>
    </source>
</evidence>
<evidence type="ECO:0000303" key="4">
    <source ref="1"/>
</evidence>
<evidence type="ECO:0000305" key="5"/>
<comment type="alternative products">
    <event type="alternative splicing"/>
    <isoform>
        <id>Q920M5-1</id>
        <name>A</name>
        <sequence type="displayed"/>
    </isoform>
    <isoform>
        <id>Q920M5-2</id>
        <name>B</name>
        <sequence type="described" ref="VSP_011749"/>
    </isoform>
    <isoform>
        <id>Q920M5-3</id>
        <name>C</name>
        <sequence type="described" ref="VSP_011750"/>
    </isoform>
    <isoform>
        <id>Q920M5-4</id>
        <name>D</name>
        <sequence type="described" ref="VSP_011749 VSP_021487"/>
    </isoform>
</comment>
<dbReference type="EMBL" id="AB070894">
    <property type="protein sequence ID" value="BAB64361.1"/>
    <property type="molecule type" value="mRNA"/>
</dbReference>
<dbReference type="EMBL" id="AB070895">
    <property type="protein sequence ID" value="BAB64362.1"/>
    <property type="molecule type" value="mRNA"/>
</dbReference>
<dbReference type="EMBL" id="AB070896">
    <property type="protein sequence ID" value="BAB64363.1"/>
    <property type="molecule type" value="mRNA"/>
</dbReference>
<dbReference type="EMBL" id="AK158179">
    <property type="protein sequence ID" value="BAE34396.1"/>
    <property type="molecule type" value="mRNA"/>
</dbReference>
<dbReference type="EMBL" id="AL607072">
    <property type="status" value="NOT_ANNOTATED_CDS"/>
    <property type="molecule type" value="Genomic_DNA"/>
</dbReference>
<dbReference type="CCDS" id="CCDS25077.1">
    <molecule id="Q920M5-1"/>
</dbReference>
<dbReference type="CCDS" id="CCDS25078.1">
    <molecule id="Q920M5-3"/>
</dbReference>
<dbReference type="CCDS" id="CCDS25079.1">
    <molecule id="Q920M5-2"/>
</dbReference>
<dbReference type="RefSeq" id="NP_624354.1">
    <molecule id="Q920M5-1"/>
    <property type="nucleotide sequence ID" value="NM_139128.2"/>
</dbReference>
<dbReference type="RefSeq" id="NP_624355.1">
    <molecule id="Q920M5-3"/>
    <property type="nucleotide sequence ID" value="NM_139129.2"/>
</dbReference>
<dbReference type="RefSeq" id="NP_624356.1">
    <molecule id="Q920M5-2"/>
    <property type="nucleotide sequence ID" value="NM_139130.3"/>
</dbReference>
<dbReference type="RefSeq" id="XP_006533000.1">
    <property type="nucleotide sequence ID" value="XM_006532937.1"/>
</dbReference>
<dbReference type="RefSeq" id="XP_006533002.1">
    <property type="nucleotide sequence ID" value="XM_006532939.1"/>
</dbReference>
<dbReference type="RefSeq" id="XP_006533003.1">
    <molecule id="Q920M5-4"/>
    <property type="nucleotide sequence ID" value="XM_006532940.3"/>
</dbReference>
<dbReference type="RefSeq" id="XP_006533004.1">
    <molecule id="Q920M5-4"/>
    <property type="nucleotide sequence ID" value="XM_006532941.3"/>
</dbReference>
<dbReference type="RefSeq" id="XP_006533005.1">
    <molecule id="Q920M5-4"/>
    <property type="nucleotide sequence ID" value="XM_006532942.3"/>
</dbReference>
<dbReference type="RefSeq" id="XP_006533007.1">
    <molecule id="Q920M5-2"/>
    <property type="nucleotide sequence ID" value="XM_006532944.3"/>
</dbReference>
<dbReference type="RefSeq" id="XP_006533008.1">
    <molecule id="Q920M5-1"/>
    <property type="nucleotide sequence ID" value="XM_006532945.4"/>
</dbReference>
<dbReference type="RefSeq" id="XP_006533010.1">
    <molecule id="Q920M5-3"/>
    <property type="nucleotide sequence ID" value="XM_006532947.4"/>
</dbReference>
<dbReference type="RefSeq" id="XP_017169950.1">
    <molecule id="Q920M5-4"/>
    <property type="nucleotide sequence ID" value="XM_017314461.3"/>
</dbReference>
<dbReference type="RefSeq" id="XP_036012471.1">
    <molecule id="Q920M5-4"/>
    <property type="nucleotide sequence ID" value="XM_036156578.1"/>
</dbReference>
<dbReference type="SMR" id="Q920M5"/>
<dbReference type="BioGRID" id="229821">
    <property type="interactions" value="2"/>
</dbReference>
<dbReference type="FunCoup" id="Q920M5">
    <property type="interactions" value="264"/>
</dbReference>
<dbReference type="STRING" id="10090.ENSMUSP00000099551"/>
<dbReference type="GlyGen" id="Q920M5">
    <property type="glycosylation" value="1 site, 1 O-linked glycan (1 site)"/>
</dbReference>
<dbReference type="iPTMnet" id="Q920M5"/>
<dbReference type="PhosphoSitePlus" id="Q920M5"/>
<dbReference type="jPOST" id="Q920M5"/>
<dbReference type="PaxDb" id="10090-ENSMUSP00000021190"/>
<dbReference type="ProteomicsDB" id="284094">
    <molecule id="Q920M5-1"/>
</dbReference>
<dbReference type="ProteomicsDB" id="284095">
    <molecule id="Q920M5-2"/>
</dbReference>
<dbReference type="ProteomicsDB" id="284096">
    <molecule id="Q920M5-3"/>
</dbReference>
<dbReference type="ProteomicsDB" id="284097">
    <molecule id="Q920M5-4"/>
</dbReference>
<dbReference type="Antibodypedia" id="54318">
    <property type="antibodies" value="120 antibodies from 16 providers"/>
</dbReference>
<dbReference type="DNASU" id="216961"/>
<dbReference type="Ensembl" id="ENSMUST00000021190.9">
    <molecule id="Q920M5-1"/>
    <property type="protein sequence ID" value="ENSMUSP00000021190.3"/>
    <property type="gene ID" value="ENSMUSG00000020836.16"/>
</dbReference>
<dbReference type="Ensembl" id="ENSMUST00000079770.3">
    <molecule id="Q920M5-3"/>
    <property type="protein sequence ID" value="ENSMUSP00000078703.3"/>
    <property type="gene ID" value="ENSMUSG00000020836.16"/>
</dbReference>
<dbReference type="Ensembl" id="ENSMUST00000102493.8">
    <molecule id="Q920M5-2"/>
    <property type="protein sequence ID" value="ENSMUSP00000099551.2"/>
    <property type="gene ID" value="ENSMUSG00000020836.16"/>
</dbReference>
<dbReference type="Ensembl" id="ENSMUST00000108391.9">
    <molecule id="Q920M5-2"/>
    <property type="protein sequence ID" value="ENSMUSP00000104028.3"/>
    <property type="gene ID" value="ENSMUSG00000020836.16"/>
</dbReference>
<dbReference type="GeneID" id="216961"/>
<dbReference type="KEGG" id="mmu:216961"/>
<dbReference type="UCSC" id="uc007kgq.1">
    <molecule id="Q920M5-3"/>
    <property type="organism name" value="mouse"/>
</dbReference>
<dbReference type="UCSC" id="uc007kgr.1">
    <molecule id="Q920M5-2"/>
    <property type="organism name" value="mouse"/>
</dbReference>
<dbReference type="UCSC" id="uc007kgs.1">
    <molecule id="Q920M5-1"/>
    <property type="organism name" value="mouse"/>
</dbReference>
<dbReference type="AGR" id="MGI:2183448"/>
<dbReference type="CTD" id="84940"/>
<dbReference type="MGI" id="MGI:2183448">
    <property type="gene designation" value="Coro6"/>
</dbReference>
<dbReference type="VEuPathDB" id="HostDB:ENSMUSG00000020836"/>
<dbReference type="eggNOG" id="KOG0303">
    <property type="taxonomic scope" value="Eukaryota"/>
</dbReference>
<dbReference type="GeneTree" id="ENSGT00940000159328"/>
<dbReference type="HOGENOM" id="CLU_026859_0_1_1"/>
<dbReference type="InParanoid" id="Q920M5"/>
<dbReference type="OMA" id="YPPILMH"/>
<dbReference type="PhylomeDB" id="Q920M5"/>
<dbReference type="TreeFam" id="TF314280"/>
<dbReference type="BioGRID-ORCS" id="216961">
    <property type="hits" value="4 hits in 79 CRISPR screens"/>
</dbReference>
<dbReference type="ChiTaRS" id="Coro6">
    <property type="organism name" value="mouse"/>
</dbReference>
<dbReference type="PRO" id="PR:Q920M5"/>
<dbReference type="Proteomes" id="UP000000589">
    <property type="component" value="Chromosome 11"/>
</dbReference>
<dbReference type="RNAct" id="Q920M5">
    <property type="molecule type" value="protein"/>
</dbReference>
<dbReference type="Bgee" id="ENSMUSG00000020836">
    <property type="expression patterns" value="Expressed in interventricular septum and 157 other cell types or tissues"/>
</dbReference>
<dbReference type="ExpressionAtlas" id="Q920M5">
    <property type="expression patterns" value="baseline and differential"/>
</dbReference>
<dbReference type="FunFam" id="2.130.10.10:FF:000003">
    <property type="entry name" value="Coronin"/>
    <property type="match status" value="1"/>
</dbReference>
<dbReference type="Gene3D" id="2.130.10.10">
    <property type="entry name" value="YVTN repeat-like/Quinoprotein amine dehydrogenase"/>
    <property type="match status" value="1"/>
</dbReference>
<dbReference type="InterPro" id="IPR015505">
    <property type="entry name" value="Coronin"/>
</dbReference>
<dbReference type="InterPro" id="IPR015048">
    <property type="entry name" value="DUF1899"/>
</dbReference>
<dbReference type="InterPro" id="IPR015943">
    <property type="entry name" value="WD40/YVTN_repeat-like_dom_sf"/>
</dbReference>
<dbReference type="InterPro" id="IPR019775">
    <property type="entry name" value="WD40_repeat_CS"/>
</dbReference>
<dbReference type="InterPro" id="IPR036322">
    <property type="entry name" value="WD40_repeat_dom_sf"/>
</dbReference>
<dbReference type="InterPro" id="IPR001680">
    <property type="entry name" value="WD40_rpt"/>
</dbReference>
<dbReference type="PANTHER" id="PTHR10856">
    <property type="entry name" value="CORONIN"/>
    <property type="match status" value="1"/>
</dbReference>
<dbReference type="PANTHER" id="PTHR10856:SF23">
    <property type="entry name" value="CORONIN-6"/>
    <property type="match status" value="1"/>
</dbReference>
<dbReference type="Pfam" id="PF08953">
    <property type="entry name" value="DUF1899"/>
    <property type="match status" value="1"/>
</dbReference>
<dbReference type="Pfam" id="PF00400">
    <property type="entry name" value="WD40"/>
    <property type="match status" value="3"/>
</dbReference>
<dbReference type="Pfam" id="PF16300">
    <property type="entry name" value="WD40_4"/>
    <property type="match status" value="1"/>
</dbReference>
<dbReference type="SMART" id="SM01166">
    <property type="entry name" value="DUF1899"/>
    <property type="match status" value="1"/>
</dbReference>
<dbReference type="SMART" id="SM01167">
    <property type="entry name" value="DUF1900"/>
    <property type="match status" value="1"/>
</dbReference>
<dbReference type="SMART" id="SM00320">
    <property type="entry name" value="WD40"/>
    <property type="match status" value="3"/>
</dbReference>
<dbReference type="SUPFAM" id="SSF50978">
    <property type="entry name" value="WD40 repeat-like"/>
    <property type="match status" value="1"/>
</dbReference>
<dbReference type="PROSITE" id="PS00678">
    <property type="entry name" value="WD_REPEATS_1"/>
    <property type="match status" value="1"/>
</dbReference>
<dbReference type="PROSITE" id="PS50082">
    <property type="entry name" value="WD_REPEATS_2"/>
    <property type="match status" value="2"/>
</dbReference>
<dbReference type="PROSITE" id="PS50294">
    <property type="entry name" value="WD_REPEATS_REGION"/>
    <property type="match status" value="1"/>
</dbReference>
<feature type="chain" id="PRO_0000050932" description="Coronin-6">
    <location>
        <begin position="1"/>
        <end position="471"/>
    </location>
</feature>
<feature type="repeat" description="WD 1">
    <location>
        <begin position="79"/>
        <end position="119"/>
    </location>
</feature>
<feature type="repeat" description="WD 2">
    <location>
        <begin position="129"/>
        <end position="169"/>
    </location>
</feature>
<feature type="repeat" description="WD 3">
    <location>
        <begin position="173"/>
        <end position="212"/>
    </location>
</feature>
<feature type="repeat" description="WD 4">
    <location>
        <begin position="216"/>
        <end position="259"/>
    </location>
</feature>
<feature type="repeat" description="WD 5">
    <location>
        <begin position="264"/>
        <end position="304"/>
    </location>
</feature>
<feature type="region of interest" description="Disordered" evidence="2">
    <location>
        <begin position="410"/>
        <end position="433"/>
    </location>
</feature>
<feature type="coiled-coil region" evidence="1">
    <location>
        <begin position="426"/>
        <end position="468"/>
    </location>
</feature>
<feature type="compositionally biased region" description="Low complexity" evidence="2">
    <location>
        <begin position="419"/>
        <end position="429"/>
    </location>
</feature>
<feature type="splice variant" id="VSP_011750" description="In isoform C." evidence="3 4">
    <location>
        <begin position="212"/>
        <end position="251"/>
    </location>
</feature>
<feature type="splice variant" id="VSP_011749" description="In isoform B and isoform D." evidence="4">
    <original>ARPHEGARPLRAVFTADGKLLSTGFSRMSERQLA</original>
    <variation>FAAHEGMRPMRAVFTRLGHIFTTGFTRMSQRELG</variation>
    <location>
        <begin position="214"/>
        <end position="247"/>
    </location>
</feature>
<feature type="splice variant" id="VSP_021487" description="In isoform D." evidence="5">
    <original>Q</original>
    <variation>QQ</variation>
    <location>
        <position position="432"/>
    </location>
</feature>
<protein>
    <recommendedName>
        <fullName>Coronin-6</fullName>
    </recommendedName>
    <alternativeName>
        <fullName>Coronin-like protein E</fullName>
        <shortName>Clipin-E</shortName>
    </alternativeName>
</protein>